<keyword id="KW-0963">Cytoplasm</keyword>
<keyword id="KW-0378">Hydrolase</keyword>
<keyword id="KW-0479">Metal-binding</keyword>
<keyword id="KW-0482">Metalloprotease</keyword>
<keyword id="KW-0539">Nucleus</keyword>
<keyword id="KW-0645">Protease</keyword>
<keyword id="KW-1185">Reference proteome</keyword>
<keyword id="KW-0862">Zinc</keyword>
<name>LKA41_PICST</name>
<organism>
    <name type="scientific">Scheffersomyces stipitis (strain ATCC 58785 / CBS 6054 / NBRC 10063 / NRRL Y-11545)</name>
    <name type="common">Yeast</name>
    <name type="synonym">Pichia stipitis</name>
    <dbReference type="NCBI Taxonomy" id="322104"/>
    <lineage>
        <taxon>Eukaryota</taxon>
        <taxon>Fungi</taxon>
        <taxon>Dikarya</taxon>
        <taxon>Ascomycota</taxon>
        <taxon>Saccharomycotina</taxon>
        <taxon>Pichiomycetes</taxon>
        <taxon>Debaryomycetaceae</taxon>
        <taxon>Scheffersomyces</taxon>
    </lineage>
</organism>
<comment type="function">
    <text evidence="2">Aminopeptidase that preferentially cleaves di- and tripeptides. Also has low epoxide hydrolase activity (in vitro). Can hydrolyze the epoxide leukotriene LTA(4) but it forms preferentially 5,6-dihydroxy-7,9,11,14-eicosatetraenoic acid rather than the cytokine leukotriene B(4) as the product compared to the homologous mammalian enzyme (in vitro).</text>
</comment>
<comment type="catalytic activity">
    <reaction evidence="2">
        <text>an epoxide + H2O = an ethanediol</text>
        <dbReference type="Rhea" id="RHEA:19037"/>
        <dbReference type="ChEBI" id="CHEBI:15377"/>
        <dbReference type="ChEBI" id="CHEBI:32955"/>
        <dbReference type="ChEBI" id="CHEBI:140594"/>
        <dbReference type="EC" id="3.3.2.10"/>
    </reaction>
</comment>
<comment type="cofactor">
    <cofactor evidence="2">
        <name>Zn(2+)</name>
        <dbReference type="ChEBI" id="CHEBI:29105"/>
    </cofactor>
    <text evidence="2">Binds 1 zinc ion per subunit.</text>
</comment>
<comment type="subcellular location">
    <subcellularLocation>
        <location evidence="2">Cytoplasm</location>
    </subcellularLocation>
    <subcellularLocation>
        <location evidence="2">Nucleus</location>
    </subcellularLocation>
</comment>
<comment type="similarity">
    <text evidence="4">Belongs to the peptidase M1 family.</text>
</comment>
<sequence length="626" mass="71543">MSKFENISKRSHELDPCTNSNYAEFKVVHTDLSLSVSFESKNISGNVIYTLKKLTKTNRLVLDTSFLEVSTAKVNGKEVVFELLPHKAPFGSPLVIPIDGENESLTVEVDFRTTDKCTAIQFIQGDTGPYVFSQCQAIHARSLFPCFDTPGVKSPYKFTAKSPSVCTMSGRPQPSNEAGVYHFDQPIPIPSYLVSITSGNLHKAPIGPRSDVYSEEPSLKDCQWEFEKDMENFIQIAEKIVFEYEWSRFDSLVLPSSFPYGGMEIPNMTQLTPTLISKDRTQVKVMAHELAHSWSGNLVTNCSWEHFWLNEGWTVYLERRIIGAIAAAEAQEEGRANPEKYGEQVRHFNAIIGWNALVETVESFDPKFTSLVWDLASGDPDDAFSRIPYEKGFNFLFHIETKVGGTKEFDPFIKHYFKKFRYQSLNSAQFIETLYDFYTPLGKKDALDTIDLEKWLFQPGLPDDPKFDTTLADQVYVLVEKWVDFVKSGETEVKFSEADVKEFEGEQEMLFIETLTDRFKDLDVSPELIRKLPSIYPKYAASKNGEVLARWNELLIKYGNYTSSDEQVKFFADWLGTVGRMKYVRPGYKLLQTSVSIEFAVETFKRFEDKYHPICKTMVQKDLNLA</sequence>
<evidence type="ECO:0000250" key="1"/>
<evidence type="ECO:0000250" key="2">
    <source>
        <dbReference type="UniProtKB" id="Q10740"/>
    </source>
</evidence>
<evidence type="ECO:0000255" key="3">
    <source>
        <dbReference type="PROSITE-ProRule" id="PRU10095"/>
    </source>
</evidence>
<evidence type="ECO:0000305" key="4"/>
<reference key="1">
    <citation type="journal article" date="2007" name="Nat. Biotechnol.">
        <title>Genome sequence of the lignocellulose-bioconverting and xylose-fermenting yeast Pichia stipitis.</title>
        <authorList>
            <person name="Jeffries T.W."/>
            <person name="Grigoriev I.V."/>
            <person name="Grimwood J."/>
            <person name="Laplaza J.M."/>
            <person name="Aerts A."/>
            <person name="Salamov A."/>
            <person name="Schmutz J."/>
            <person name="Lindquist E."/>
            <person name="Dehal P."/>
            <person name="Shapiro H."/>
            <person name="Jin Y.-S."/>
            <person name="Passoth V."/>
            <person name="Richardson P.M."/>
        </authorList>
    </citation>
    <scope>NUCLEOTIDE SEQUENCE [LARGE SCALE GENOMIC DNA]</scope>
    <source>
        <strain>ATCC 58785 / CBS 6054 / NBRC 10063 / NRRL Y-11545</strain>
    </source>
</reference>
<protein>
    <recommendedName>
        <fullName>Leucine aminopeptidase 2-1</fullName>
        <ecNumber>3.4.11.-</ecNumber>
    </recommendedName>
    <alternativeName>
        <fullName>Epoxide hydrolase</fullName>
        <ecNumber>3.3.2.10</ecNumber>
    </alternativeName>
    <alternativeName>
        <fullName>Leukotriene A-4 hydrolase homolog 1</fullName>
        <shortName>LTA-4 hydrolase 1</shortName>
    </alternativeName>
</protein>
<proteinExistence type="inferred from homology"/>
<dbReference type="EC" id="3.4.11.-"/>
<dbReference type="EC" id="3.3.2.10"/>
<dbReference type="EMBL" id="CP000497">
    <property type="protein sequence ID" value="ABN65808.2"/>
    <property type="molecule type" value="Genomic_DNA"/>
</dbReference>
<dbReference type="RefSeq" id="XP_001383837.2">
    <property type="nucleotide sequence ID" value="XM_001383800.1"/>
</dbReference>
<dbReference type="SMR" id="A3LRX6"/>
<dbReference type="STRING" id="322104.A3LRX6"/>
<dbReference type="MEROPS" id="M01.034"/>
<dbReference type="GeneID" id="4837771"/>
<dbReference type="KEGG" id="pic:PICST_76777"/>
<dbReference type="eggNOG" id="KOG1047">
    <property type="taxonomic scope" value="Eukaryota"/>
</dbReference>
<dbReference type="HOGENOM" id="CLU_014505_1_2_1"/>
<dbReference type="InParanoid" id="A3LRX6"/>
<dbReference type="OMA" id="FPGNHHP"/>
<dbReference type="OrthoDB" id="79562at2759"/>
<dbReference type="Proteomes" id="UP000002258">
    <property type="component" value="Chromosome 3"/>
</dbReference>
<dbReference type="GO" id="GO:0005829">
    <property type="term" value="C:cytosol"/>
    <property type="evidence" value="ECO:0007669"/>
    <property type="project" value="TreeGrafter"/>
</dbReference>
<dbReference type="GO" id="GO:0005634">
    <property type="term" value="C:nucleus"/>
    <property type="evidence" value="ECO:0007669"/>
    <property type="project" value="UniProtKB-SubCell"/>
</dbReference>
<dbReference type="GO" id="GO:0004177">
    <property type="term" value="F:aminopeptidase activity"/>
    <property type="evidence" value="ECO:0000250"/>
    <property type="project" value="UniProtKB"/>
</dbReference>
<dbReference type="GO" id="GO:0004301">
    <property type="term" value="F:epoxide hydrolase activity"/>
    <property type="evidence" value="ECO:0000250"/>
    <property type="project" value="UniProtKB"/>
</dbReference>
<dbReference type="GO" id="GO:0008237">
    <property type="term" value="F:metallopeptidase activity"/>
    <property type="evidence" value="ECO:0007669"/>
    <property type="project" value="UniProtKB-KW"/>
</dbReference>
<dbReference type="GO" id="GO:0008270">
    <property type="term" value="F:zinc ion binding"/>
    <property type="evidence" value="ECO:0000250"/>
    <property type="project" value="UniProtKB"/>
</dbReference>
<dbReference type="GO" id="GO:0043171">
    <property type="term" value="P:peptide catabolic process"/>
    <property type="evidence" value="ECO:0000250"/>
    <property type="project" value="UniProtKB"/>
</dbReference>
<dbReference type="GO" id="GO:0006508">
    <property type="term" value="P:proteolysis"/>
    <property type="evidence" value="ECO:0007669"/>
    <property type="project" value="UniProtKB-KW"/>
</dbReference>
<dbReference type="CDD" id="cd09599">
    <property type="entry name" value="M1_LTA4H"/>
    <property type="match status" value="1"/>
</dbReference>
<dbReference type="FunFam" id="1.10.390.10:FF:000009">
    <property type="entry name" value="Leukotriene A(4) hydrolase"/>
    <property type="match status" value="1"/>
</dbReference>
<dbReference type="FunFam" id="1.25.40.320:FF:000001">
    <property type="entry name" value="Leukotriene A(4) hydrolase"/>
    <property type="match status" value="1"/>
</dbReference>
<dbReference type="FunFam" id="3.30.2010.30:FF:000001">
    <property type="entry name" value="Leukotriene A(4) hydrolase"/>
    <property type="match status" value="1"/>
</dbReference>
<dbReference type="Gene3D" id="3.30.2010.30">
    <property type="match status" value="1"/>
</dbReference>
<dbReference type="Gene3D" id="1.10.390.10">
    <property type="entry name" value="Neutral Protease Domain 2"/>
    <property type="match status" value="1"/>
</dbReference>
<dbReference type="Gene3D" id="1.25.40.320">
    <property type="entry name" value="Peptidase M1, leukotriene A4 hydrolase/aminopeptidase C-terminal domain"/>
    <property type="match status" value="1"/>
</dbReference>
<dbReference type="Gene3D" id="2.60.40.1730">
    <property type="entry name" value="tricorn interacting facor f3 domain"/>
    <property type="match status" value="1"/>
</dbReference>
<dbReference type="InterPro" id="IPR045357">
    <property type="entry name" value="Aminopeptidase_N-like_N"/>
</dbReference>
<dbReference type="InterPro" id="IPR042097">
    <property type="entry name" value="Aminopeptidase_N-like_N_sf"/>
</dbReference>
<dbReference type="InterPro" id="IPR016024">
    <property type="entry name" value="ARM-type_fold"/>
</dbReference>
<dbReference type="InterPro" id="IPR012777">
    <property type="entry name" value="LTA4H"/>
</dbReference>
<dbReference type="InterPro" id="IPR049980">
    <property type="entry name" value="LTA4H_cat"/>
</dbReference>
<dbReference type="InterPro" id="IPR038502">
    <property type="entry name" value="M1_LTA-4_hydro/amino_C_sf"/>
</dbReference>
<dbReference type="InterPro" id="IPR034015">
    <property type="entry name" value="M1_LTA4H"/>
</dbReference>
<dbReference type="InterPro" id="IPR001930">
    <property type="entry name" value="Peptidase_M1"/>
</dbReference>
<dbReference type="InterPro" id="IPR015211">
    <property type="entry name" value="Peptidase_M1_C"/>
</dbReference>
<dbReference type="InterPro" id="IPR014782">
    <property type="entry name" value="Peptidase_M1_dom"/>
</dbReference>
<dbReference type="InterPro" id="IPR027268">
    <property type="entry name" value="Peptidase_M4/M1_CTD_sf"/>
</dbReference>
<dbReference type="NCBIfam" id="TIGR02411">
    <property type="entry name" value="leuko_A4_hydro"/>
    <property type="match status" value="1"/>
</dbReference>
<dbReference type="PANTHER" id="PTHR45726">
    <property type="entry name" value="LEUKOTRIENE A-4 HYDROLASE"/>
    <property type="match status" value="1"/>
</dbReference>
<dbReference type="PANTHER" id="PTHR45726:SF3">
    <property type="entry name" value="LEUKOTRIENE A-4 HYDROLASE"/>
    <property type="match status" value="1"/>
</dbReference>
<dbReference type="Pfam" id="PF09127">
    <property type="entry name" value="Leuk-A4-hydro_C"/>
    <property type="match status" value="1"/>
</dbReference>
<dbReference type="Pfam" id="PF01433">
    <property type="entry name" value="Peptidase_M1"/>
    <property type="match status" value="1"/>
</dbReference>
<dbReference type="Pfam" id="PF17900">
    <property type="entry name" value="Peptidase_M1_N"/>
    <property type="match status" value="1"/>
</dbReference>
<dbReference type="PRINTS" id="PR00756">
    <property type="entry name" value="ALADIPTASE"/>
</dbReference>
<dbReference type="SMART" id="SM01263">
    <property type="entry name" value="Leuk-A4-hydro_C"/>
    <property type="match status" value="1"/>
</dbReference>
<dbReference type="SUPFAM" id="SSF48371">
    <property type="entry name" value="ARM repeat"/>
    <property type="match status" value="1"/>
</dbReference>
<dbReference type="SUPFAM" id="SSF63737">
    <property type="entry name" value="Leukotriene A4 hydrolase N-terminal domain"/>
    <property type="match status" value="1"/>
</dbReference>
<dbReference type="SUPFAM" id="SSF55486">
    <property type="entry name" value="Metalloproteases ('zincins'), catalytic domain"/>
    <property type="match status" value="1"/>
</dbReference>
<dbReference type="PROSITE" id="PS00142">
    <property type="entry name" value="ZINC_PROTEASE"/>
    <property type="match status" value="1"/>
</dbReference>
<accession>A3LRX6</accession>
<gene>
    <name type="primary">LKA4</name>
    <name type="ORF">PICST_76777</name>
</gene>
<feature type="chain" id="PRO_0000324938" description="Leucine aminopeptidase 2-1">
    <location>
        <begin position="1"/>
        <end position="626"/>
    </location>
</feature>
<feature type="active site" description="Proton acceptor" evidence="3">
    <location>
        <position position="289"/>
    </location>
</feature>
<feature type="active site" description="Proton donor" evidence="3">
    <location>
        <position position="389"/>
    </location>
</feature>
<feature type="binding site" evidence="1">
    <location>
        <begin position="134"/>
        <end position="136"/>
    </location>
    <ligand>
        <name>substrate</name>
    </ligand>
</feature>
<feature type="binding site" evidence="1">
    <location>
        <begin position="259"/>
        <end position="264"/>
    </location>
    <ligand>
        <name>substrate</name>
    </ligand>
</feature>
<feature type="binding site" evidence="3">
    <location>
        <position position="288"/>
    </location>
    <ligand>
        <name>Zn(2+)</name>
        <dbReference type="ChEBI" id="CHEBI:29105"/>
        <note>catalytic</note>
    </ligand>
</feature>
<feature type="binding site" evidence="3">
    <location>
        <position position="292"/>
    </location>
    <ligand>
        <name>Zn(2+)</name>
        <dbReference type="ChEBI" id="CHEBI:29105"/>
        <note>catalytic</note>
    </ligand>
</feature>
<feature type="binding site" evidence="3">
    <location>
        <position position="311"/>
    </location>
    <ligand>
        <name>Zn(2+)</name>
        <dbReference type="ChEBI" id="CHEBI:29105"/>
        <note>catalytic</note>
    </ligand>
</feature>